<name>SRS1_ORYSI</name>
<gene>
    <name type="ORF">OsI_001009</name>
</gene>
<proteinExistence type="evidence at protein level"/>
<evidence type="ECO:0000256" key="1">
    <source>
        <dbReference type="SAM" id="MobiDB-lite"/>
    </source>
</evidence>
<evidence type="ECO:0000269" key="2">
    <source ref="2"/>
</evidence>
<evidence type="ECO:0000305" key="3"/>
<protein>
    <recommendedName>
        <fullName>Salt stress root protein RS1</fullName>
    </recommendedName>
</protein>
<accession>A2WMG6</accession>
<accession>P83649</accession>
<accession>Q9LGY5</accession>
<feature type="chain" id="PRO_0000300255" description="Salt stress root protein RS1">
    <location>
        <begin position="1"/>
        <end position="204"/>
    </location>
</feature>
<feature type="region of interest" description="Disordered" evidence="1">
    <location>
        <begin position="128"/>
        <end position="204"/>
    </location>
</feature>
<feature type="compositionally biased region" description="Basic and acidic residues" evidence="1">
    <location>
        <begin position="147"/>
        <end position="161"/>
    </location>
</feature>
<feature type="compositionally biased region" description="Low complexity" evidence="1">
    <location>
        <begin position="164"/>
        <end position="180"/>
    </location>
</feature>
<feature type="compositionally biased region" description="Basic and acidic residues" evidence="1">
    <location>
        <begin position="182"/>
        <end position="192"/>
    </location>
</feature>
<feature type="compositionally biased region" description="Low complexity" evidence="1">
    <location>
        <begin position="193"/>
        <end position="204"/>
    </location>
</feature>
<sequence>MTSVWKTKVLTGLNKLFDKDGKKAAAAEFLKSFNKEEIGKEIDDKKTELEPKVVEVVESSPPEIKALLKDKKTASKIKKNGPAVTKFLEELAKIDFPGAKPVSDAVAKSGTTPLSPAIAFILEKVAPFVPKEEPKPEPEAEAAAETTSREVAVEEEKKEEEAAPAEPAAAAAEAAAPSTEVVEEKKEEEKPAEAAAPAAEPEKQ</sequence>
<dbReference type="EMBL" id="CM000126">
    <property type="protein sequence ID" value="EAY73162.1"/>
    <property type="molecule type" value="Genomic_DNA"/>
</dbReference>
<dbReference type="STRING" id="39946.A2WMG6"/>
<dbReference type="EnsemblPlants" id="BGIOSGA002067-TA">
    <property type="protein sequence ID" value="BGIOSGA002067-PA"/>
    <property type="gene ID" value="BGIOSGA002067"/>
</dbReference>
<dbReference type="EnsemblPlants" id="OsGoSa_01g0009080.01">
    <property type="protein sequence ID" value="OsGoSa_01g0009080.01"/>
    <property type="gene ID" value="OsGoSa_01g0009080"/>
</dbReference>
<dbReference type="EnsemblPlants" id="OsGoSa_01g0009080.02">
    <property type="protein sequence ID" value="OsGoSa_01g0009080.02"/>
    <property type="gene ID" value="OsGoSa_01g0009080"/>
</dbReference>
<dbReference type="EnsemblPlants" id="OsIR64_01g0009100.01">
    <property type="protein sequence ID" value="OsIR64_01g0009100.01"/>
    <property type="gene ID" value="OsIR64_01g0009100"/>
</dbReference>
<dbReference type="EnsemblPlants" id="OsIR64_01g0009100.02">
    <property type="protein sequence ID" value="OsIR64_01g0009100.02"/>
    <property type="gene ID" value="OsIR64_01g0009100"/>
</dbReference>
<dbReference type="EnsemblPlants" id="OsIR64_01g0009100.03">
    <property type="protein sequence ID" value="OsIR64_01g0009100.03"/>
    <property type="gene ID" value="OsIR64_01g0009100"/>
</dbReference>
<dbReference type="EnsemblPlants" id="OsKYG_01g0009130.01">
    <property type="protein sequence ID" value="OsKYG_01g0009130.01"/>
    <property type="gene ID" value="OsKYG_01g0009130"/>
</dbReference>
<dbReference type="EnsemblPlants" id="OsKYG_01g0009130.02">
    <property type="protein sequence ID" value="OsKYG_01g0009130.02"/>
    <property type="gene ID" value="OsKYG_01g0009130"/>
</dbReference>
<dbReference type="EnsemblPlants" id="OsKYG_01g0009130.03">
    <property type="protein sequence ID" value="OsKYG_01g0009130.03"/>
    <property type="gene ID" value="OsKYG_01g0009130"/>
</dbReference>
<dbReference type="EnsemblPlants" id="OsLima_01g0008210.01">
    <property type="protein sequence ID" value="OsLima_01g0008210.01"/>
    <property type="gene ID" value="OsLima_01g0008210"/>
</dbReference>
<dbReference type="EnsemblPlants" id="OsLima_01g0008210.02">
    <property type="protein sequence ID" value="OsLima_01g0008210.02"/>
    <property type="gene ID" value="OsLima_01g0008210"/>
</dbReference>
<dbReference type="EnsemblPlants" id="OsLiXu_01g0009210.01">
    <property type="protein sequence ID" value="OsLiXu_01g0009210.01"/>
    <property type="gene ID" value="OsLiXu_01g0009210"/>
</dbReference>
<dbReference type="EnsemblPlants" id="OsLiXu_01g0009210.02">
    <property type="protein sequence ID" value="OsLiXu_01g0009210.02"/>
    <property type="gene ID" value="OsLiXu_01g0009210"/>
</dbReference>
<dbReference type="EnsemblPlants" id="OsMH63_01G009420_01">
    <property type="protein sequence ID" value="OsMH63_01G009420_01"/>
    <property type="gene ID" value="OsMH63_01G009420"/>
</dbReference>
<dbReference type="EnsemblPlants" id="OsMH63_01G009420_02">
    <property type="protein sequence ID" value="OsMH63_01G009420_02"/>
    <property type="gene ID" value="OsMH63_01G009420"/>
</dbReference>
<dbReference type="EnsemblPlants" id="OsPr106_01g0009090.01">
    <property type="protein sequence ID" value="OsPr106_01g0009090.01"/>
    <property type="gene ID" value="OsPr106_01g0009090"/>
</dbReference>
<dbReference type="EnsemblPlants" id="OsPr106_01g0009090.02">
    <property type="protein sequence ID" value="OsPr106_01g0009090.02"/>
    <property type="gene ID" value="OsPr106_01g0009090"/>
</dbReference>
<dbReference type="EnsemblPlants" id="OsZS97_01G008970_01">
    <property type="protein sequence ID" value="OsZS97_01G008970_01"/>
    <property type="gene ID" value="OsZS97_01G008970"/>
</dbReference>
<dbReference type="EnsemblPlants" id="OsZS97_01G008970_02">
    <property type="protein sequence ID" value="OsZS97_01G008970_02"/>
    <property type="gene ID" value="OsZS97_01G008970"/>
</dbReference>
<dbReference type="EnsemblPlants" id="OsZS97_01G008970_03">
    <property type="protein sequence ID" value="OsZS97_01G008970_03"/>
    <property type="gene ID" value="OsZS97_01G008970"/>
</dbReference>
<dbReference type="Gramene" id="BGIOSGA002067-TA">
    <property type="protein sequence ID" value="BGIOSGA002067-PA"/>
    <property type="gene ID" value="BGIOSGA002067"/>
</dbReference>
<dbReference type="Gramene" id="OsGoSa_01g0009080.01">
    <property type="protein sequence ID" value="OsGoSa_01g0009080.01"/>
    <property type="gene ID" value="OsGoSa_01g0009080"/>
</dbReference>
<dbReference type="Gramene" id="OsGoSa_01g0009080.02">
    <property type="protein sequence ID" value="OsGoSa_01g0009080.02"/>
    <property type="gene ID" value="OsGoSa_01g0009080"/>
</dbReference>
<dbReference type="Gramene" id="OsIR64_01g0009100.01">
    <property type="protein sequence ID" value="OsIR64_01g0009100.01"/>
    <property type="gene ID" value="OsIR64_01g0009100"/>
</dbReference>
<dbReference type="Gramene" id="OsIR64_01g0009100.02">
    <property type="protein sequence ID" value="OsIR64_01g0009100.02"/>
    <property type="gene ID" value="OsIR64_01g0009100"/>
</dbReference>
<dbReference type="Gramene" id="OsIR64_01g0009100.03">
    <property type="protein sequence ID" value="OsIR64_01g0009100.03"/>
    <property type="gene ID" value="OsIR64_01g0009100"/>
</dbReference>
<dbReference type="Gramene" id="OsKYG_01g0009130.01">
    <property type="protein sequence ID" value="OsKYG_01g0009130.01"/>
    <property type="gene ID" value="OsKYG_01g0009130"/>
</dbReference>
<dbReference type="Gramene" id="OsKYG_01g0009130.02">
    <property type="protein sequence ID" value="OsKYG_01g0009130.02"/>
    <property type="gene ID" value="OsKYG_01g0009130"/>
</dbReference>
<dbReference type="Gramene" id="OsKYG_01g0009130.03">
    <property type="protein sequence ID" value="OsKYG_01g0009130.03"/>
    <property type="gene ID" value="OsKYG_01g0009130"/>
</dbReference>
<dbReference type="Gramene" id="OsLima_01g0008210.01">
    <property type="protein sequence ID" value="OsLima_01g0008210.01"/>
    <property type="gene ID" value="OsLima_01g0008210"/>
</dbReference>
<dbReference type="Gramene" id="OsLima_01g0008210.02">
    <property type="protein sequence ID" value="OsLima_01g0008210.02"/>
    <property type="gene ID" value="OsLima_01g0008210"/>
</dbReference>
<dbReference type="Gramene" id="OsLiXu_01g0009210.01">
    <property type="protein sequence ID" value="OsLiXu_01g0009210.01"/>
    <property type="gene ID" value="OsLiXu_01g0009210"/>
</dbReference>
<dbReference type="Gramene" id="OsLiXu_01g0009210.02">
    <property type="protein sequence ID" value="OsLiXu_01g0009210.02"/>
    <property type="gene ID" value="OsLiXu_01g0009210"/>
</dbReference>
<dbReference type="Gramene" id="OsMH63_01G009420_01">
    <property type="protein sequence ID" value="OsMH63_01G009420_01"/>
    <property type="gene ID" value="OsMH63_01G009420"/>
</dbReference>
<dbReference type="Gramene" id="OsMH63_01G009420_02">
    <property type="protein sequence ID" value="OsMH63_01G009420_02"/>
    <property type="gene ID" value="OsMH63_01G009420"/>
</dbReference>
<dbReference type="Gramene" id="OsPr106_01g0009090.01">
    <property type="protein sequence ID" value="OsPr106_01g0009090.01"/>
    <property type="gene ID" value="OsPr106_01g0009090"/>
</dbReference>
<dbReference type="Gramene" id="OsPr106_01g0009090.02">
    <property type="protein sequence ID" value="OsPr106_01g0009090.02"/>
    <property type="gene ID" value="OsPr106_01g0009090"/>
</dbReference>
<dbReference type="Gramene" id="OsZS97_01G008970_01">
    <property type="protein sequence ID" value="OsZS97_01G008970_01"/>
    <property type="gene ID" value="OsZS97_01G008970"/>
</dbReference>
<dbReference type="Gramene" id="OsZS97_01G008970_02">
    <property type="protein sequence ID" value="OsZS97_01G008970_02"/>
    <property type="gene ID" value="OsZS97_01G008970"/>
</dbReference>
<dbReference type="Gramene" id="OsZS97_01G008970_03">
    <property type="protein sequence ID" value="OsZS97_01G008970_03"/>
    <property type="gene ID" value="OsZS97_01G008970"/>
</dbReference>
<dbReference type="HOGENOM" id="CLU_088395_0_0_1"/>
<dbReference type="OMA" id="KEEPAAX"/>
<dbReference type="OrthoDB" id="1933409at2759"/>
<dbReference type="Proteomes" id="UP000007015">
    <property type="component" value="Chromosome 1"/>
</dbReference>
<dbReference type="GO" id="GO:0005886">
    <property type="term" value="C:plasma membrane"/>
    <property type="evidence" value="ECO:0007669"/>
    <property type="project" value="InterPro"/>
</dbReference>
<dbReference type="InterPro" id="IPR008469">
    <property type="entry name" value="DREPP"/>
</dbReference>
<dbReference type="PANTHER" id="PTHR38522">
    <property type="entry name" value="PLASMA MEMBRANE-ASSOCIATED CATION-BINDING PROTEIN 1"/>
    <property type="match status" value="1"/>
</dbReference>
<dbReference type="PANTHER" id="PTHR38522:SF1">
    <property type="entry name" value="SALT STRESS ROOT PROTEIN RS1"/>
    <property type="match status" value="1"/>
</dbReference>
<dbReference type="Pfam" id="PF05558">
    <property type="entry name" value="DREPP"/>
    <property type="match status" value="1"/>
</dbReference>
<keyword id="KW-0903">Direct protein sequencing</keyword>
<keyword id="KW-1185">Reference proteome</keyword>
<comment type="induction">
    <text evidence="2">Up-regulated under salt stress.</text>
</comment>
<comment type="similarity">
    <text evidence="3">Belongs to the DREPP family.</text>
</comment>
<organism>
    <name type="scientific">Oryza sativa subsp. indica</name>
    <name type="common">Rice</name>
    <dbReference type="NCBI Taxonomy" id="39946"/>
    <lineage>
        <taxon>Eukaryota</taxon>
        <taxon>Viridiplantae</taxon>
        <taxon>Streptophyta</taxon>
        <taxon>Embryophyta</taxon>
        <taxon>Tracheophyta</taxon>
        <taxon>Spermatophyta</taxon>
        <taxon>Magnoliopsida</taxon>
        <taxon>Liliopsida</taxon>
        <taxon>Poales</taxon>
        <taxon>Poaceae</taxon>
        <taxon>BOP clade</taxon>
        <taxon>Oryzoideae</taxon>
        <taxon>Oryzeae</taxon>
        <taxon>Oryzinae</taxon>
        <taxon>Oryza</taxon>
        <taxon>Oryza sativa</taxon>
    </lineage>
</organism>
<reference key="1">
    <citation type="journal article" date="2005" name="PLoS Biol.">
        <title>The genomes of Oryza sativa: a history of duplications.</title>
        <authorList>
            <person name="Yu J."/>
            <person name="Wang J."/>
            <person name="Lin W."/>
            <person name="Li S."/>
            <person name="Li H."/>
            <person name="Zhou J."/>
            <person name="Ni P."/>
            <person name="Dong W."/>
            <person name="Hu S."/>
            <person name="Zeng C."/>
            <person name="Zhang J."/>
            <person name="Zhang Y."/>
            <person name="Li R."/>
            <person name="Xu Z."/>
            <person name="Li S."/>
            <person name="Li X."/>
            <person name="Zheng H."/>
            <person name="Cong L."/>
            <person name="Lin L."/>
            <person name="Yin J."/>
            <person name="Geng J."/>
            <person name="Li G."/>
            <person name="Shi J."/>
            <person name="Liu J."/>
            <person name="Lv H."/>
            <person name="Li J."/>
            <person name="Wang J."/>
            <person name="Deng Y."/>
            <person name="Ran L."/>
            <person name="Shi X."/>
            <person name="Wang X."/>
            <person name="Wu Q."/>
            <person name="Li C."/>
            <person name="Ren X."/>
            <person name="Wang J."/>
            <person name="Wang X."/>
            <person name="Li D."/>
            <person name="Liu D."/>
            <person name="Zhang X."/>
            <person name="Ji Z."/>
            <person name="Zhao W."/>
            <person name="Sun Y."/>
            <person name="Zhang Z."/>
            <person name="Bao J."/>
            <person name="Han Y."/>
            <person name="Dong L."/>
            <person name="Ji J."/>
            <person name="Chen P."/>
            <person name="Wu S."/>
            <person name="Liu J."/>
            <person name="Xiao Y."/>
            <person name="Bu D."/>
            <person name="Tan J."/>
            <person name="Yang L."/>
            <person name="Ye C."/>
            <person name="Zhang J."/>
            <person name="Xu J."/>
            <person name="Zhou Y."/>
            <person name="Yu Y."/>
            <person name="Zhang B."/>
            <person name="Zhuang S."/>
            <person name="Wei H."/>
            <person name="Liu B."/>
            <person name="Lei M."/>
            <person name="Yu H."/>
            <person name="Li Y."/>
            <person name="Xu H."/>
            <person name="Wei S."/>
            <person name="He X."/>
            <person name="Fang L."/>
            <person name="Zhang Z."/>
            <person name="Zhang Y."/>
            <person name="Huang X."/>
            <person name="Su Z."/>
            <person name="Tong W."/>
            <person name="Li J."/>
            <person name="Tong Z."/>
            <person name="Li S."/>
            <person name="Ye J."/>
            <person name="Wang L."/>
            <person name="Fang L."/>
            <person name="Lei T."/>
            <person name="Chen C.-S."/>
            <person name="Chen H.-C."/>
            <person name="Xu Z."/>
            <person name="Li H."/>
            <person name="Huang H."/>
            <person name="Zhang F."/>
            <person name="Xu H."/>
            <person name="Li N."/>
            <person name="Zhao C."/>
            <person name="Li S."/>
            <person name="Dong L."/>
            <person name="Huang Y."/>
            <person name="Li L."/>
            <person name="Xi Y."/>
            <person name="Qi Q."/>
            <person name="Li W."/>
            <person name="Zhang B."/>
            <person name="Hu W."/>
            <person name="Zhang Y."/>
            <person name="Tian X."/>
            <person name="Jiao Y."/>
            <person name="Liang X."/>
            <person name="Jin J."/>
            <person name="Gao L."/>
            <person name="Zheng W."/>
            <person name="Hao B."/>
            <person name="Liu S.-M."/>
            <person name="Wang W."/>
            <person name="Yuan L."/>
            <person name="Cao M."/>
            <person name="McDermott J."/>
            <person name="Samudrala R."/>
            <person name="Wang J."/>
            <person name="Wong G.K.-S."/>
            <person name="Yang H."/>
        </authorList>
    </citation>
    <scope>NUCLEOTIDE SEQUENCE [LARGE SCALE GENOMIC DNA]</scope>
    <source>
        <strain>cv. 93-11</strain>
    </source>
</reference>
<reference key="2">
    <citation type="journal article" date="2002" name="Field Crops Res.">
        <title>A proteomic approach to analyzing drought- and salt-responsiveness in rice.</title>
        <authorList>
            <person name="Salekdeh G.H."/>
            <person name="Siopongco J."/>
            <person name="Wade L.J."/>
            <person name="Ghareyazie B."/>
            <person name="Bennett J."/>
        </authorList>
        <dbReference type="AGRICOLA" id="IND23282209"/>
    </citation>
    <scope>PROTEIN SEQUENCE OF 53-65 AND 109-124</scope>
    <scope>INDUCTION</scope>
    <source>
        <strain>cv. Pokkali</strain>
        <tissue>Root</tissue>
    </source>
</reference>